<reference key="1">
    <citation type="submission" date="2006-06" db="EMBL/GenBank/DDBJ databases">
        <title>Complete sequence of Pseudoalteromonas atlantica T6c.</title>
        <authorList>
            <consortium name="US DOE Joint Genome Institute"/>
            <person name="Copeland A."/>
            <person name="Lucas S."/>
            <person name="Lapidus A."/>
            <person name="Barry K."/>
            <person name="Detter J.C."/>
            <person name="Glavina del Rio T."/>
            <person name="Hammon N."/>
            <person name="Israni S."/>
            <person name="Dalin E."/>
            <person name="Tice H."/>
            <person name="Pitluck S."/>
            <person name="Saunders E."/>
            <person name="Brettin T."/>
            <person name="Bruce D."/>
            <person name="Han C."/>
            <person name="Tapia R."/>
            <person name="Gilna P."/>
            <person name="Schmutz J."/>
            <person name="Larimer F."/>
            <person name="Land M."/>
            <person name="Hauser L."/>
            <person name="Kyrpides N."/>
            <person name="Kim E."/>
            <person name="Karls A.C."/>
            <person name="Bartlett D."/>
            <person name="Higgins B.P."/>
            <person name="Richardson P."/>
        </authorList>
    </citation>
    <scope>NUCLEOTIDE SEQUENCE [LARGE SCALE GENOMIC DNA]</scope>
    <source>
        <strain>T6c / ATCC BAA-1087</strain>
    </source>
</reference>
<comment type="function">
    <text evidence="1">Catalyzes the decarboxylation of four acetate groups of uroporphyrinogen-III to yield coproporphyrinogen-III.</text>
</comment>
<comment type="catalytic activity">
    <reaction evidence="1">
        <text>uroporphyrinogen III + 4 H(+) = coproporphyrinogen III + 4 CO2</text>
        <dbReference type="Rhea" id="RHEA:19865"/>
        <dbReference type="ChEBI" id="CHEBI:15378"/>
        <dbReference type="ChEBI" id="CHEBI:16526"/>
        <dbReference type="ChEBI" id="CHEBI:57308"/>
        <dbReference type="ChEBI" id="CHEBI:57309"/>
        <dbReference type="EC" id="4.1.1.37"/>
    </reaction>
</comment>
<comment type="pathway">
    <text evidence="1">Porphyrin-containing compound metabolism; protoporphyrin-IX biosynthesis; coproporphyrinogen-III from 5-aminolevulinate: step 4/4.</text>
</comment>
<comment type="subunit">
    <text evidence="1">Homodimer.</text>
</comment>
<comment type="subcellular location">
    <subcellularLocation>
        <location evidence="1">Cytoplasm</location>
    </subcellularLocation>
</comment>
<comment type="similarity">
    <text evidence="1">Belongs to the uroporphyrinogen decarboxylase family.</text>
</comment>
<organism>
    <name type="scientific">Pseudoalteromonas atlantica (strain T6c / ATCC BAA-1087)</name>
    <dbReference type="NCBI Taxonomy" id="3042615"/>
    <lineage>
        <taxon>Bacteria</taxon>
        <taxon>Pseudomonadati</taxon>
        <taxon>Pseudomonadota</taxon>
        <taxon>Gammaproteobacteria</taxon>
        <taxon>Alteromonadales</taxon>
        <taxon>Alteromonadaceae</taxon>
        <taxon>Paraglaciecola</taxon>
    </lineage>
</organism>
<name>DCUP_PSEA6</name>
<accession>Q15ZB1</accession>
<gene>
    <name evidence="1" type="primary">hemE</name>
    <name type="ordered locus">Patl_0245</name>
</gene>
<dbReference type="EC" id="4.1.1.37" evidence="1"/>
<dbReference type="EMBL" id="CP000388">
    <property type="protein sequence ID" value="ABG38777.1"/>
    <property type="molecule type" value="Genomic_DNA"/>
</dbReference>
<dbReference type="RefSeq" id="WP_011573178.1">
    <property type="nucleotide sequence ID" value="NC_008228.1"/>
</dbReference>
<dbReference type="SMR" id="Q15ZB1"/>
<dbReference type="STRING" id="342610.Patl_0245"/>
<dbReference type="KEGG" id="pat:Patl_0245"/>
<dbReference type="eggNOG" id="COG0407">
    <property type="taxonomic scope" value="Bacteria"/>
</dbReference>
<dbReference type="HOGENOM" id="CLU_040933_0_0_6"/>
<dbReference type="OrthoDB" id="9806656at2"/>
<dbReference type="UniPathway" id="UPA00251">
    <property type="reaction ID" value="UER00321"/>
</dbReference>
<dbReference type="Proteomes" id="UP000001981">
    <property type="component" value="Chromosome"/>
</dbReference>
<dbReference type="GO" id="GO:0005829">
    <property type="term" value="C:cytosol"/>
    <property type="evidence" value="ECO:0007669"/>
    <property type="project" value="TreeGrafter"/>
</dbReference>
<dbReference type="GO" id="GO:0004853">
    <property type="term" value="F:uroporphyrinogen decarboxylase activity"/>
    <property type="evidence" value="ECO:0007669"/>
    <property type="project" value="UniProtKB-UniRule"/>
</dbReference>
<dbReference type="GO" id="GO:0019353">
    <property type="term" value="P:protoporphyrinogen IX biosynthetic process from glutamate"/>
    <property type="evidence" value="ECO:0007669"/>
    <property type="project" value="TreeGrafter"/>
</dbReference>
<dbReference type="CDD" id="cd00717">
    <property type="entry name" value="URO-D"/>
    <property type="match status" value="1"/>
</dbReference>
<dbReference type="FunFam" id="3.20.20.210:FF:000001">
    <property type="entry name" value="Uroporphyrinogen decarboxylase"/>
    <property type="match status" value="1"/>
</dbReference>
<dbReference type="Gene3D" id="3.20.20.210">
    <property type="match status" value="1"/>
</dbReference>
<dbReference type="HAMAP" id="MF_00218">
    <property type="entry name" value="URO_D"/>
    <property type="match status" value="1"/>
</dbReference>
<dbReference type="InterPro" id="IPR038071">
    <property type="entry name" value="UROD/MetE-like_sf"/>
</dbReference>
<dbReference type="InterPro" id="IPR006361">
    <property type="entry name" value="Uroporphyrinogen_deCO2ase_HemE"/>
</dbReference>
<dbReference type="InterPro" id="IPR000257">
    <property type="entry name" value="Uroporphyrinogen_deCOase"/>
</dbReference>
<dbReference type="NCBIfam" id="TIGR01464">
    <property type="entry name" value="hemE"/>
    <property type="match status" value="1"/>
</dbReference>
<dbReference type="PANTHER" id="PTHR21091">
    <property type="entry name" value="METHYLTETRAHYDROFOLATE:HOMOCYSTEINE METHYLTRANSFERASE RELATED"/>
    <property type="match status" value="1"/>
</dbReference>
<dbReference type="PANTHER" id="PTHR21091:SF169">
    <property type="entry name" value="UROPORPHYRINOGEN DECARBOXYLASE"/>
    <property type="match status" value="1"/>
</dbReference>
<dbReference type="Pfam" id="PF01208">
    <property type="entry name" value="URO-D"/>
    <property type="match status" value="1"/>
</dbReference>
<dbReference type="SUPFAM" id="SSF51726">
    <property type="entry name" value="UROD/MetE-like"/>
    <property type="match status" value="1"/>
</dbReference>
<dbReference type="PROSITE" id="PS00906">
    <property type="entry name" value="UROD_1"/>
    <property type="match status" value="1"/>
</dbReference>
<dbReference type="PROSITE" id="PS00907">
    <property type="entry name" value="UROD_2"/>
    <property type="match status" value="1"/>
</dbReference>
<feature type="chain" id="PRO_1000023944" description="Uroporphyrinogen decarboxylase">
    <location>
        <begin position="1"/>
        <end position="355"/>
    </location>
</feature>
<feature type="binding site" evidence="1">
    <location>
        <begin position="27"/>
        <end position="31"/>
    </location>
    <ligand>
        <name>substrate</name>
    </ligand>
</feature>
<feature type="binding site" evidence="1">
    <location>
        <position position="77"/>
    </location>
    <ligand>
        <name>substrate</name>
    </ligand>
</feature>
<feature type="binding site" evidence="1">
    <location>
        <position position="154"/>
    </location>
    <ligand>
        <name>substrate</name>
    </ligand>
</feature>
<feature type="binding site" evidence="1">
    <location>
        <position position="209"/>
    </location>
    <ligand>
        <name>substrate</name>
    </ligand>
</feature>
<feature type="binding site" evidence="1">
    <location>
        <position position="327"/>
    </location>
    <ligand>
        <name>substrate</name>
    </ligand>
</feature>
<feature type="site" description="Transition state stabilizer" evidence="1">
    <location>
        <position position="77"/>
    </location>
</feature>
<sequence length="355" mass="39271">MNSLKNDRYLRALLRQPVDVTPVWMMRQAGRYLPEYKATRAQAGDFMSLCKNAELACEVTLQPLRRFDLDAAILFSDILTIPDAMGLGLYFEQGEGPKFSKPITSMADIQNLPAPDPEQELQYVMNAVRTIRKNLQGEVPLIGFSGSPWTLATYMIEGGSSKAFTKIKKMAFSDPQALHLLLDKLADSVILYLNAQIDAGAQSVMVFDTWGGVLSPRDYQDFSLQYMHKIVDGLTRENDGRKVPVTLFTKNAGMWLESIAATGCDGVGLDWTIDIDNAKARVGDKVALQGNMDPSMLYAAPERIEQEVQKILAGFGEGPGHVFNLGHGIHLDVPPENAKVFVDAVHKYSAQYHKG</sequence>
<proteinExistence type="inferred from homology"/>
<keyword id="KW-0963">Cytoplasm</keyword>
<keyword id="KW-0210">Decarboxylase</keyword>
<keyword id="KW-0456">Lyase</keyword>
<keyword id="KW-0627">Porphyrin biosynthesis</keyword>
<protein>
    <recommendedName>
        <fullName evidence="1">Uroporphyrinogen decarboxylase</fullName>
        <shortName evidence="1">UPD</shortName>
        <shortName evidence="1">URO-D</shortName>
        <ecNumber evidence="1">4.1.1.37</ecNumber>
    </recommendedName>
</protein>
<evidence type="ECO:0000255" key="1">
    <source>
        <dbReference type="HAMAP-Rule" id="MF_00218"/>
    </source>
</evidence>